<accession>P35855</accession>
<sequence length="405" mass="47758">MLNLQPYENPQYFVYLIIALLPVIIGMFKGFRMHWYESIFSLVFLVLIFDADKWPQGKALLGYVVFNLLLVYAYFKYRTREGSKNSTAVFYLSVALGIAHVAVVKFTPLFQHHGSILGFLGISYLTFRVVGTIMEIRDGSIKDLNMWKFIQFLLFFPTISSGPIDRYRRFVKDYDRVPDPEHYAQLVTKAIHYLMLGFLYKFILGYIFGTLWLPSVEHMAMASRGGAFLGLSWPVVGVMYAYSGYLFFDFAGYSLFAVAISYLMGIETPMNFNKPWSHITSRLLNRWQLSLSFWFRDYIYMRFVFFMMKHKWIKSRVWTAFVGYLVLFLIMGIWHGETWYYIVYGLFHAMLINLTDAWLRFKKKHKDFFPHNRATHYPSPFSMTANAVCFSFLIFSGFLDKLWFH</sequence>
<reference key="1">
    <citation type="journal article" date="1996" name="Microb. Drug Resist.">
        <title>The dlt operon in the biosynthesis of D-alanyl-lipoteichoic acid in Lactobacillus casei.</title>
        <authorList>
            <person name="Neuhaus F.C."/>
            <person name="Heaton M.P."/>
            <person name="Debabov D.V."/>
            <person name="Zhang Q."/>
        </authorList>
    </citation>
    <scope>NUCLEOTIDE SEQUENCE [GENOMIC DNA]</scope>
    <source>
        <strain>ATCC 7469 / DSM 20021 / JCM 1136 / CCUG 21452 / KCTC 1046 / NCDO 243 / NCIMB 6375 / NCTC 12953</strain>
    </source>
</reference>
<reference key="2">
    <citation type="journal article" date="1992" name="J. Bacteriol.">
        <title>Biosynthesis of D-alanyl-lipoteichoic acid: cloning, nucleotide sequence, and expression of the Lactobacillus casei gene for the D-alanine-activating enzyme.</title>
        <authorList>
            <person name="Heaton M.P."/>
            <person name="Neuhaus F.C."/>
        </authorList>
    </citation>
    <scope>NUCLEOTIDE SEQUENCE [GENOMIC DNA] OF 1-188</scope>
    <source>
        <strain>ATCC 7469 / DSM 20021 / JCM 1136 / CCUG 21452 / KCTC 1046 / NCDO 243 / NCIMB 6375 / NCTC 12953</strain>
    </source>
</reference>
<comment type="function">
    <text evidence="1">O-acyltransferase that catalyzes D-alanylation of both teichoic acid and lipoteichoic acid (LTA). D-alanylation of LTA plays an important role in modulating the properties of the cell wall in Gram-positive bacteria, influencing the net charge of the cell wall. Catalyzes D-alanylation from DltC carrier protein.</text>
</comment>
<comment type="pathway">
    <text evidence="1">Cell wall biogenesis; lipoteichoic acid biosynthesis.</text>
</comment>
<comment type="subcellular location">
    <subcellularLocation>
        <location evidence="1">Cell membrane</location>
        <topology evidence="1">Multi-pass membrane protein</topology>
    </subcellularLocation>
</comment>
<comment type="domain">
    <text evidence="1">Consists of a ring of transmembrane domains, which shield a highly conserved extracellular structural funnel extending into the middle of the lipid bilayer. The conserved catalytic His residue is located at the bottom of this funnel and is connected to the intracellular DltC through a narrow tunnel.</text>
</comment>
<comment type="similarity">
    <text evidence="4">Belongs to the membrane-bound acyltransferase family.</text>
</comment>
<dbReference type="EC" id="2.3.1.-" evidence="1"/>
<dbReference type="EMBL" id="U43894">
    <property type="protein sequence ID" value="AAB17658.1"/>
    <property type="molecule type" value="Genomic_DNA"/>
</dbReference>
<dbReference type="EMBL" id="M83993">
    <property type="protein sequence ID" value="AAA25235.1"/>
    <property type="molecule type" value="Genomic_DNA"/>
</dbReference>
<dbReference type="PIR" id="B42983">
    <property type="entry name" value="B42983"/>
</dbReference>
<dbReference type="SMR" id="P35855"/>
<dbReference type="STRING" id="47715.AWJ15_13950"/>
<dbReference type="eggNOG" id="COG1696">
    <property type="taxonomic scope" value="Bacteria"/>
</dbReference>
<dbReference type="UniPathway" id="UPA00556"/>
<dbReference type="GO" id="GO:0005886">
    <property type="term" value="C:plasma membrane"/>
    <property type="evidence" value="ECO:0007669"/>
    <property type="project" value="UniProtKB-SubCell"/>
</dbReference>
<dbReference type="GO" id="GO:0016746">
    <property type="term" value="F:acyltransferase activity"/>
    <property type="evidence" value="ECO:0007669"/>
    <property type="project" value="UniProtKB-KW"/>
</dbReference>
<dbReference type="GO" id="GO:0070395">
    <property type="term" value="P:lipoteichoic acid biosynthetic process"/>
    <property type="evidence" value="ECO:0007669"/>
    <property type="project" value="UniProtKB-UniPathway"/>
</dbReference>
<dbReference type="InterPro" id="IPR024194">
    <property type="entry name" value="Ac/AlaTfrase_AlgI/DltB"/>
</dbReference>
<dbReference type="InterPro" id="IPR024024">
    <property type="entry name" value="DltB"/>
</dbReference>
<dbReference type="InterPro" id="IPR051085">
    <property type="entry name" value="MB_O-acyltransferase"/>
</dbReference>
<dbReference type="InterPro" id="IPR004299">
    <property type="entry name" value="MBOAT_fam"/>
</dbReference>
<dbReference type="NCBIfam" id="TIGR04091">
    <property type="entry name" value="LTA_dltB"/>
    <property type="match status" value="1"/>
</dbReference>
<dbReference type="PANTHER" id="PTHR13285">
    <property type="entry name" value="ACYLTRANSFERASE"/>
    <property type="match status" value="1"/>
</dbReference>
<dbReference type="PANTHER" id="PTHR13285:SF23">
    <property type="entry name" value="TEICHOIC ACID D-ALANYLTRANSFERASE"/>
    <property type="match status" value="1"/>
</dbReference>
<dbReference type="Pfam" id="PF03062">
    <property type="entry name" value="MBOAT"/>
    <property type="match status" value="1"/>
</dbReference>
<dbReference type="PIRSF" id="PIRSF016636">
    <property type="entry name" value="AlgI_DltB"/>
    <property type="match status" value="1"/>
</dbReference>
<dbReference type="PIRSF" id="PIRSF500216">
    <property type="entry name" value="DltB"/>
    <property type="match status" value="1"/>
</dbReference>
<gene>
    <name evidence="3" type="primary">dltB</name>
</gene>
<proteinExistence type="inferred from homology"/>
<keyword id="KW-0012">Acyltransferase</keyword>
<keyword id="KW-1003">Cell membrane</keyword>
<keyword id="KW-0472">Membrane</keyword>
<keyword id="KW-0808">Transferase</keyword>
<keyword id="KW-0812">Transmembrane</keyword>
<keyword id="KW-1133">Transmembrane helix</keyword>
<evidence type="ECO:0000250" key="1">
    <source>
        <dbReference type="UniProtKB" id="Q5M4V4"/>
    </source>
</evidence>
<evidence type="ECO:0000255" key="2"/>
<evidence type="ECO:0000303" key="3">
    <source>
    </source>
</evidence>
<evidence type="ECO:0000305" key="4"/>
<organism>
    <name type="scientific">Lacticaseibacillus rhamnosus</name>
    <name type="common">Lactobacillus rhamnosus</name>
    <dbReference type="NCBI Taxonomy" id="47715"/>
    <lineage>
        <taxon>Bacteria</taxon>
        <taxon>Bacillati</taxon>
        <taxon>Bacillota</taxon>
        <taxon>Bacilli</taxon>
        <taxon>Lactobacillales</taxon>
        <taxon>Lactobacillaceae</taxon>
        <taxon>Lacticaseibacillus</taxon>
    </lineage>
</organism>
<name>DLTB_LACRH</name>
<feature type="chain" id="PRO_0000213129" description="Teichoic acid D-alanyltransferase">
    <location>
        <begin position="1"/>
        <end position="405"/>
    </location>
</feature>
<feature type="topological domain" description="Extracellular" evidence="4">
    <location>
        <begin position="1"/>
        <end position="9"/>
    </location>
</feature>
<feature type="transmembrane region" description="Helical" evidence="1">
    <location>
        <begin position="10"/>
        <end position="29"/>
    </location>
</feature>
<feature type="topological domain" description="Cytoplasmic" evidence="4">
    <location>
        <begin position="30"/>
        <end position="33"/>
    </location>
</feature>
<feature type="transmembrane region" description="Helical" evidence="1">
    <location>
        <begin position="34"/>
        <end position="49"/>
    </location>
</feature>
<feature type="topological domain" description="Extracellular" evidence="4">
    <location>
        <begin position="50"/>
        <end position="53"/>
    </location>
</feature>
<feature type="transmembrane region" description="Helical" evidence="1">
    <location>
        <begin position="54"/>
        <end position="80"/>
    </location>
</feature>
<feature type="topological domain" description="Cytoplasmic" evidence="4">
    <location>
        <begin position="81"/>
        <end position="86"/>
    </location>
</feature>
<feature type="transmembrane region" description="Helical" evidence="1">
    <location>
        <begin position="87"/>
        <end position="111"/>
    </location>
</feature>
<feature type="topological domain" description="Extracellular" evidence="4">
    <location>
        <begin position="112"/>
        <end position="121"/>
    </location>
</feature>
<feature type="transmembrane region" description="Helical" evidence="1">
    <location>
        <begin position="122"/>
        <end position="138"/>
    </location>
</feature>
<feature type="topological domain" description="Cytoplasmic" evidence="4">
    <location>
        <begin position="139"/>
        <end position="145"/>
    </location>
</feature>
<feature type="intramembrane region" evidence="1">
    <location>
        <begin position="146"/>
        <end position="175"/>
    </location>
</feature>
<feature type="topological domain" description="Cytoplasmic" evidence="4">
    <location>
        <begin position="176"/>
        <end position="179"/>
    </location>
</feature>
<feature type="transmembrane region" description="Helical" evidence="1">
    <location>
        <begin position="180"/>
        <end position="223"/>
    </location>
</feature>
<feature type="topological domain" description="Extracellular" evidence="4">
    <location>
        <begin position="224"/>
        <end position="232"/>
    </location>
</feature>
<feature type="transmembrane region" description="Helical" evidence="1">
    <location>
        <begin position="233"/>
        <end position="264"/>
    </location>
</feature>
<feature type="topological domain" description="Cytoplasmic" evidence="4">
    <location>
        <begin position="265"/>
        <end position="274"/>
    </location>
</feature>
<feature type="intramembrane region" evidence="1">
    <location>
        <begin position="275"/>
        <end position="310"/>
    </location>
</feature>
<feature type="topological domain" description="Cytoplasmic" evidence="4">
    <location>
        <begin position="311"/>
        <end position="315"/>
    </location>
</feature>
<feature type="transmembrane region" description="Helical" evidence="1">
    <location>
        <begin position="316"/>
        <end position="335"/>
    </location>
</feature>
<feature type="topological domain" description="Extracellular" evidence="4">
    <location>
        <begin position="336"/>
        <end position="338"/>
    </location>
</feature>
<feature type="transmembrane region" description="Helical" evidence="1">
    <location>
        <begin position="339"/>
        <end position="372"/>
    </location>
</feature>
<feature type="topological domain" description="Cytoplasmic" evidence="4">
    <location>
        <begin position="373"/>
        <end position="378"/>
    </location>
</feature>
<feature type="transmembrane region" description="Helical" evidence="2">
    <location>
        <begin position="379"/>
        <end position="399"/>
    </location>
</feature>
<feature type="topological domain" description="Extracellular" evidence="4">
    <location>
        <begin position="400"/>
        <end position="405"/>
    </location>
</feature>
<feature type="active site" evidence="1">
    <location>
        <position position="335"/>
    </location>
</feature>
<protein>
    <recommendedName>
        <fullName evidence="1">Teichoic acid D-alanyltransferase</fullName>
        <ecNumber evidence="1">2.3.1.-</ecNumber>
    </recommendedName>
    <alternativeName>
        <fullName>Basic membrane protein</fullName>
        <shortName>BMP</shortName>
    </alternativeName>
</protein>